<evidence type="ECO:0000255" key="1"/>
<evidence type="ECO:0000305" key="2"/>
<reference key="1">
    <citation type="journal article" date="1995" name="Science">
        <title>Whole-genome random sequencing and assembly of Haemophilus influenzae Rd.</title>
        <authorList>
            <person name="Fleischmann R.D."/>
            <person name="Adams M.D."/>
            <person name="White O."/>
            <person name="Clayton R.A."/>
            <person name="Kirkness E.F."/>
            <person name="Kerlavage A.R."/>
            <person name="Bult C.J."/>
            <person name="Tomb J.-F."/>
            <person name="Dougherty B.A."/>
            <person name="Merrick J.M."/>
            <person name="McKenney K."/>
            <person name="Sutton G.G."/>
            <person name="FitzHugh W."/>
            <person name="Fields C.A."/>
            <person name="Gocayne J.D."/>
            <person name="Scott J.D."/>
            <person name="Shirley R."/>
            <person name="Liu L.-I."/>
            <person name="Glodek A."/>
            <person name="Kelley J.M."/>
            <person name="Weidman J.F."/>
            <person name="Phillips C.A."/>
            <person name="Spriggs T."/>
            <person name="Hedblom E."/>
            <person name="Cotton M.D."/>
            <person name="Utterback T.R."/>
            <person name="Hanna M.C."/>
            <person name="Nguyen D.T."/>
            <person name="Saudek D.M."/>
            <person name="Brandon R.C."/>
            <person name="Fine L.D."/>
            <person name="Fritchman J.L."/>
            <person name="Fuhrmann J.L."/>
            <person name="Geoghagen N.S.M."/>
            <person name="Gnehm C.L."/>
            <person name="McDonald L.A."/>
            <person name="Small K.V."/>
            <person name="Fraser C.M."/>
            <person name="Smith H.O."/>
            <person name="Venter J.C."/>
        </authorList>
    </citation>
    <scope>NUCLEOTIDE SEQUENCE [LARGE SCALE GENOMIC DNA]</scope>
    <source>
        <strain>ATCC 51907 / DSM 11121 / KW20 / Rd</strain>
    </source>
</reference>
<accession>P45335</accession>
<organism>
    <name type="scientific">Haemophilus influenzae (strain ATCC 51907 / DSM 11121 / KW20 / Rd)</name>
    <dbReference type="NCBI Taxonomy" id="71421"/>
    <lineage>
        <taxon>Bacteria</taxon>
        <taxon>Pseudomonadati</taxon>
        <taxon>Pseudomonadota</taxon>
        <taxon>Gammaproteobacteria</taxon>
        <taxon>Pasteurellales</taxon>
        <taxon>Pasteurellaceae</taxon>
        <taxon>Haemophilus</taxon>
    </lineage>
</organism>
<comment type="subcellular location">
    <subcellularLocation>
        <location evidence="2">Cell inner membrane</location>
        <topology evidence="2">Multi-pass membrane protein</topology>
    </subcellularLocation>
</comment>
<comment type="similarity">
    <text evidence="2">Belongs to the BCCT transporter (TC 2.A.15) family.</text>
</comment>
<proteinExistence type="inferred from homology"/>
<sequence>MTKRTSFNPLVIGVTLFFILLLMAMIFIAPEQTQALLNQAKSGIFANFSWFYVLTFSVFLGFLLILSVSSLGNIKLGQDEEEPEFSFLSWLAMLFAAGMGVGLMFFGVAEPLTHYLSDITAGSAEHKQQEALLHTLFHWGIHAWAVYGTIALALAYFGFRYKLPLALRSCFYPLLKDRINGKIGDAIDVMALLATLFGIITTLGFGSSQLGAGLEQIGWISQNSFALQVGVIVVVMCLAVFSAISGVGKGVKILSEINLTLAFCLLLFVLISGPTLYLLSAFSDNIGNYFSNLVQLSFKTYAYEQEHTSWFSGWTVLYWAWWCSWAPFVGLFIARISKGRTIREFIFGVLVIPSLFGILWFTVFGNTAVWLNDGIAAGGLGEFISSPEILLFKFLNYLPLPTITGFVSLLVILLFFITSADSGIYVLNNIASRDKSLASPAWQAIMWGTLMSVVAIVLMQSGGLANLQTMTLIVALPFALLMLVMCFSLWKGLIADKKYFSTKVNPTSIFWSGDKWKSHLEQMMNQTQEKDILRFLKNTALPAMRELRQELTGKYNLSVEINTLFEQEEPALELVIHKESMRDFMYGIKSVGREVSEQLINDENLPHIQHSATYEPYTYFFDGRVGYDVQYMDQDELIADMLKQYERYLSLLDDVGQELMAHEQTELAE</sequence>
<feature type="chain" id="PRO_0000201496" description="Uncharacterized transporter HI_1706">
    <location>
        <begin position="1"/>
        <end position="669"/>
    </location>
</feature>
<feature type="transmembrane region" description="Helical" evidence="1">
    <location>
        <begin position="9"/>
        <end position="29"/>
    </location>
</feature>
<feature type="transmembrane region" description="Helical" evidence="1">
    <location>
        <begin position="48"/>
        <end position="68"/>
    </location>
</feature>
<feature type="transmembrane region" description="Helical" evidence="1">
    <location>
        <begin position="87"/>
        <end position="107"/>
    </location>
</feature>
<feature type="transmembrane region" description="Helical" evidence="1">
    <location>
        <begin position="139"/>
        <end position="159"/>
    </location>
</feature>
<feature type="transmembrane region" description="Helical" evidence="1">
    <location>
        <begin position="186"/>
        <end position="206"/>
    </location>
</feature>
<feature type="transmembrane region" description="Helical" evidence="1">
    <location>
        <begin position="224"/>
        <end position="244"/>
    </location>
</feature>
<feature type="transmembrane region" description="Helical" evidence="1">
    <location>
        <begin position="259"/>
        <end position="279"/>
    </location>
</feature>
<feature type="transmembrane region" description="Helical" evidence="1">
    <location>
        <begin position="314"/>
        <end position="334"/>
    </location>
</feature>
<feature type="transmembrane region" description="Helical" evidence="1">
    <location>
        <begin position="345"/>
        <end position="365"/>
    </location>
</feature>
<feature type="transmembrane region" description="Helical" evidence="1">
    <location>
        <begin position="397"/>
        <end position="417"/>
    </location>
</feature>
<feature type="transmembrane region" description="Helical" evidence="1">
    <location>
        <begin position="444"/>
        <end position="464"/>
    </location>
</feature>
<feature type="transmembrane region" description="Helical" evidence="1">
    <location>
        <begin position="470"/>
        <end position="490"/>
    </location>
</feature>
<keyword id="KW-0997">Cell inner membrane</keyword>
<keyword id="KW-1003">Cell membrane</keyword>
<keyword id="KW-0472">Membrane</keyword>
<keyword id="KW-1185">Reference proteome</keyword>
<keyword id="KW-0812">Transmembrane</keyword>
<keyword id="KW-1133">Transmembrane helix</keyword>
<keyword id="KW-0813">Transport</keyword>
<gene>
    <name type="ordered locus">HI_1706</name>
</gene>
<dbReference type="EMBL" id="L42023">
    <property type="protein sequence ID" value="AAC23352.1"/>
    <property type="molecule type" value="Genomic_DNA"/>
</dbReference>
<dbReference type="PIR" id="D64137">
    <property type="entry name" value="D64137"/>
</dbReference>
<dbReference type="RefSeq" id="NP_439848.2">
    <property type="nucleotide sequence ID" value="NC_000907.1"/>
</dbReference>
<dbReference type="SMR" id="P45335"/>
<dbReference type="STRING" id="71421.HI_1706"/>
<dbReference type="EnsemblBacteria" id="AAC23352">
    <property type="protein sequence ID" value="AAC23352"/>
    <property type="gene ID" value="HI_1706"/>
</dbReference>
<dbReference type="KEGG" id="hin:HI_1706"/>
<dbReference type="PATRIC" id="fig|71421.8.peg.1785"/>
<dbReference type="eggNOG" id="COG1292">
    <property type="taxonomic scope" value="Bacteria"/>
</dbReference>
<dbReference type="HOGENOM" id="CLU_010118_3_1_6"/>
<dbReference type="OrthoDB" id="9775735at2"/>
<dbReference type="PhylomeDB" id="P45335"/>
<dbReference type="Proteomes" id="UP000000579">
    <property type="component" value="Chromosome"/>
</dbReference>
<dbReference type="GO" id="GO:0005886">
    <property type="term" value="C:plasma membrane"/>
    <property type="evidence" value="ECO:0000318"/>
    <property type="project" value="GO_Central"/>
</dbReference>
<dbReference type="GO" id="GO:0022857">
    <property type="term" value="F:transmembrane transporter activity"/>
    <property type="evidence" value="ECO:0000318"/>
    <property type="project" value="GO_Central"/>
</dbReference>
<dbReference type="InterPro" id="IPR018093">
    <property type="entry name" value="BCCT_CS"/>
</dbReference>
<dbReference type="InterPro" id="IPR000060">
    <property type="entry name" value="BCCT_transptr"/>
</dbReference>
<dbReference type="NCBIfam" id="TIGR00842">
    <property type="entry name" value="bcct"/>
    <property type="match status" value="1"/>
</dbReference>
<dbReference type="PANTHER" id="PTHR30047:SF7">
    <property type="entry name" value="HIGH-AFFINITY CHOLINE TRANSPORT PROTEIN"/>
    <property type="match status" value="1"/>
</dbReference>
<dbReference type="PANTHER" id="PTHR30047">
    <property type="entry name" value="HIGH-AFFINITY CHOLINE TRANSPORT PROTEIN-RELATED"/>
    <property type="match status" value="1"/>
</dbReference>
<dbReference type="Pfam" id="PF02028">
    <property type="entry name" value="BCCT"/>
    <property type="match status" value="1"/>
</dbReference>
<dbReference type="PROSITE" id="PS01303">
    <property type="entry name" value="BCCT"/>
    <property type="match status" value="1"/>
</dbReference>
<protein>
    <recommendedName>
        <fullName>Uncharacterized transporter HI_1706</fullName>
    </recommendedName>
</protein>
<name>Y1706_HAEIN</name>